<name>LEU1_VIBPA</name>
<dbReference type="EC" id="2.3.3.13" evidence="1"/>
<dbReference type="EMBL" id="BA000031">
    <property type="protein sequence ID" value="BAC58608.1"/>
    <property type="molecule type" value="Genomic_DNA"/>
</dbReference>
<dbReference type="RefSeq" id="NP_796724.1">
    <property type="nucleotide sequence ID" value="NC_004603.1"/>
</dbReference>
<dbReference type="RefSeq" id="WP_005459507.1">
    <property type="nucleotide sequence ID" value="NC_004603.1"/>
</dbReference>
<dbReference type="SMR" id="Q87SS7"/>
<dbReference type="GeneID" id="1187812"/>
<dbReference type="KEGG" id="vpa:VP0346"/>
<dbReference type="PATRIC" id="fig|223926.6.peg.332"/>
<dbReference type="eggNOG" id="COG0119">
    <property type="taxonomic scope" value="Bacteria"/>
</dbReference>
<dbReference type="HOGENOM" id="CLU_022158_0_1_6"/>
<dbReference type="UniPathway" id="UPA00048">
    <property type="reaction ID" value="UER00070"/>
</dbReference>
<dbReference type="Proteomes" id="UP000002493">
    <property type="component" value="Chromosome 1"/>
</dbReference>
<dbReference type="GO" id="GO:0005829">
    <property type="term" value="C:cytosol"/>
    <property type="evidence" value="ECO:0007669"/>
    <property type="project" value="TreeGrafter"/>
</dbReference>
<dbReference type="GO" id="GO:0003852">
    <property type="term" value="F:2-isopropylmalate synthase activity"/>
    <property type="evidence" value="ECO:0007669"/>
    <property type="project" value="UniProtKB-UniRule"/>
</dbReference>
<dbReference type="GO" id="GO:0003985">
    <property type="term" value="F:acetyl-CoA C-acetyltransferase activity"/>
    <property type="evidence" value="ECO:0007669"/>
    <property type="project" value="UniProtKB-UniRule"/>
</dbReference>
<dbReference type="GO" id="GO:0030145">
    <property type="term" value="F:manganese ion binding"/>
    <property type="evidence" value="ECO:0007669"/>
    <property type="project" value="UniProtKB-UniRule"/>
</dbReference>
<dbReference type="GO" id="GO:0009098">
    <property type="term" value="P:L-leucine biosynthetic process"/>
    <property type="evidence" value="ECO:0007669"/>
    <property type="project" value="UniProtKB-UniRule"/>
</dbReference>
<dbReference type="CDD" id="cd07940">
    <property type="entry name" value="DRE_TIM_IPMS"/>
    <property type="match status" value="1"/>
</dbReference>
<dbReference type="FunFam" id="1.10.238.260:FF:000001">
    <property type="entry name" value="2-isopropylmalate synthase"/>
    <property type="match status" value="1"/>
</dbReference>
<dbReference type="FunFam" id="3.20.20.70:FF:000010">
    <property type="entry name" value="2-isopropylmalate synthase"/>
    <property type="match status" value="1"/>
</dbReference>
<dbReference type="FunFam" id="3.30.160.270:FF:000001">
    <property type="entry name" value="2-isopropylmalate synthase"/>
    <property type="match status" value="1"/>
</dbReference>
<dbReference type="Gene3D" id="1.10.238.260">
    <property type="match status" value="1"/>
</dbReference>
<dbReference type="Gene3D" id="3.30.160.270">
    <property type="match status" value="1"/>
</dbReference>
<dbReference type="Gene3D" id="3.20.20.70">
    <property type="entry name" value="Aldolase class I"/>
    <property type="match status" value="1"/>
</dbReference>
<dbReference type="HAMAP" id="MF_01025">
    <property type="entry name" value="LeuA_type1"/>
    <property type="match status" value="1"/>
</dbReference>
<dbReference type="InterPro" id="IPR050073">
    <property type="entry name" value="2-IPM_HCS-like"/>
</dbReference>
<dbReference type="InterPro" id="IPR013709">
    <property type="entry name" value="2-isopropylmalate_synth_dimer"/>
</dbReference>
<dbReference type="InterPro" id="IPR002034">
    <property type="entry name" value="AIPM/Hcit_synth_CS"/>
</dbReference>
<dbReference type="InterPro" id="IPR013785">
    <property type="entry name" value="Aldolase_TIM"/>
</dbReference>
<dbReference type="InterPro" id="IPR054691">
    <property type="entry name" value="LeuA/HCS_post-cat"/>
</dbReference>
<dbReference type="InterPro" id="IPR036230">
    <property type="entry name" value="LeuA_allosteric_dom_sf"/>
</dbReference>
<dbReference type="InterPro" id="IPR005671">
    <property type="entry name" value="LeuA_bact_synth"/>
</dbReference>
<dbReference type="InterPro" id="IPR000891">
    <property type="entry name" value="PYR_CT"/>
</dbReference>
<dbReference type="NCBIfam" id="TIGR00973">
    <property type="entry name" value="leuA_bact"/>
    <property type="match status" value="1"/>
</dbReference>
<dbReference type="NCBIfam" id="NF002084">
    <property type="entry name" value="PRK00915.1-1"/>
    <property type="match status" value="1"/>
</dbReference>
<dbReference type="NCBIfam" id="NF002086">
    <property type="entry name" value="PRK00915.1-3"/>
    <property type="match status" value="1"/>
</dbReference>
<dbReference type="PANTHER" id="PTHR10277:SF9">
    <property type="entry name" value="2-ISOPROPYLMALATE SYNTHASE 1, CHLOROPLASTIC-RELATED"/>
    <property type="match status" value="1"/>
</dbReference>
<dbReference type="PANTHER" id="PTHR10277">
    <property type="entry name" value="HOMOCITRATE SYNTHASE-RELATED"/>
    <property type="match status" value="1"/>
</dbReference>
<dbReference type="Pfam" id="PF22617">
    <property type="entry name" value="HCS_D2"/>
    <property type="match status" value="1"/>
</dbReference>
<dbReference type="Pfam" id="PF00682">
    <property type="entry name" value="HMGL-like"/>
    <property type="match status" value="1"/>
</dbReference>
<dbReference type="Pfam" id="PF08502">
    <property type="entry name" value="LeuA_dimer"/>
    <property type="match status" value="1"/>
</dbReference>
<dbReference type="SMART" id="SM00917">
    <property type="entry name" value="LeuA_dimer"/>
    <property type="match status" value="1"/>
</dbReference>
<dbReference type="SUPFAM" id="SSF110921">
    <property type="entry name" value="2-isopropylmalate synthase LeuA, allosteric (dimerisation) domain"/>
    <property type="match status" value="1"/>
</dbReference>
<dbReference type="SUPFAM" id="SSF51569">
    <property type="entry name" value="Aldolase"/>
    <property type="match status" value="1"/>
</dbReference>
<dbReference type="PROSITE" id="PS00815">
    <property type="entry name" value="AIPM_HOMOCIT_SYNTH_1"/>
    <property type="match status" value="1"/>
</dbReference>
<dbReference type="PROSITE" id="PS00816">
    <property type="entry name" value="AIPM_HOMOCIT_SYNTH_2"/>
    <property type="match status" value="1"/>
</dbReference>
<dbReference type="PROSITE" id="PS50991">
    <property type="entry name" value="PYR_CT"/>
    <property type="match status" value="1"/>
</dbReference>
<keyword id="KW-0028">Amino-acid biosynthesis</keyword>
<keyword id="KW-0100">Branched-chain amino acid biosynthesis</keyword>
<keyword id="KW-0963">Cytoplasm</keyword>
<keyword id="KW-0432">Leucine biosynthesis</keyword>
<keyword id="KW-0464">Manganese</keyword>
<keyword id="KW-0479">Metal-binding</keyword>
<keyword id="KW-0808">Transferase</keyword>
<proteinExistence type="inferred from homology"/>
<organism>
    <name type="scientific">Vibrio parahaemolyticus serotype O3:K6 (strain RIMD 2210633)</name>
    <dbReference type="NCBI Taxonomy" id="223926"/>
    <lineage>
        <taxon>Bacteria</taxon>
        <taxon>Pseudomonadati</taxon>
        <taxon>Pseudomonadota</taxon>
        <taxon>Gammaproteobacteria</taxon>
        <taxon>Vibrionales</taxon>
        <taxon>Vibrionaceae</taxon>
        <taxon>Vibrio</taxon>
    </lineage>
</organism>
<protein>
    <recommendedName>
        <fullName evidence="1">2-isopropylmalate synthase</fullName>
        <ecNumber evidence="1">2.3.3.13</ecNumber>
    </recommendedName>
    <alternativeName>
        <fullName evidence="1">Alpha-IPM synthase</fullName>
    </alternativeName>
    <alternativeName>
        <fullName evidence="1">Alpha-isopropylmalate synthase</fullName>
    </alternativeName>
</protein>
<reference key="1">
    <citation type="journal article" date="2003" name="Lancet">
        <title>Genome sequence of Vibrio parahaemolyticus: a pathogenic mechanism distinct from that of V. cholerae.</title>
        <authorList>
            <person name="Makino K."/>
            <person name="Oshima K."/>
            <person name="Kurokawa K."/>
            <person name="Yokoyama K."/>
            <person name="Uda T."/>
            <person name="Tagomori K."/>
            <person name="Iijima Y."/>
            <person name="Najima M."/>
            <person name="Nakano M."/>
            <person name="Yamashita A."/>
            <person name="Kubota Y."/>
            <person name="Kimura S."/>
            <person name="Yasunaga T."/>
            <person name="Honda T."/>
            <person name="Shinagawa H."/>
            <person name="Hattori M."/>
            <person name="Iida T."/>
        </authorList>
    </citation>
    <scope>NUCLEOTIDE SEQUENCE [LARGE SCALE GENOMIC DNA]</scope>
    <source>
        <strain>RIMD 2210633</strain>
    </source>
</reference>
<comment type="function">
    <text evidence="1">Catalyzes the condensation of the acetyl group of acetyl-CoA with 3-methyl-2-oxobutanoate (2-ketoisovalerate) to form 3-carboxy-3-hydroxy-4-methylpentanoate (2-isopropylmalate).</text>
</comment>
<comment type="catalytic activity">
    <reaction evidence="1">
        <text>3-methyl-2-oxobutanoate + acetyl-CoA + H2O = (2S)-2-isopropylmalate + CoA + H(+)</text>
        <dbReference type="Rhea" id="RHEA:21524"/>
        <dbReference type="ChEBI" id="CHEBI:1178"/>
        <dbReference type="ChEBI" id="CHEBI:11851"/>
        <dbReference type="ChEBI" id="CHEBI:15377"/>
        <dbReference type="ChEBI" id="CHEBI:15378"/>
        <dbReference type="ChEBI" id="CHEBI:57287"/>
        <dbReference type="ChEBI" id="CHEBI:57288"/>
        <dbReference type="EC" id="2.3.3.13"/>
    </reaction>
</comment>
<comment type="cofactor">
    <cofactor evidence="1">
        <name>Mn(2+)</name>
        <dbReference type="ChEBI" id="CHEBI:29035"/>
    </cofactor>
</comment>
<comment type="pathway">
    <text evidence="1">Amino-acid biosynthesis; L-leucine biosynthesis; L-leucine from 3-methyl-2-oxobutanoate: step 1/4.</text>
</comment>
<comment type="subunit">
    <text evidence="1">Homodimer.</text>
</comment>
<comment type="subcellular location">
    <subcellularLocation>
        <location evidence="1">Cytoplasm</location>
    </subcellularLocation>
</comment>
<comment type="similarity">
    <text evidence="1">Belongs to the alpha-IPM synthase/homocitrate synthase family. LeuA type 1 subfamily.</text>
</comment>
<evidence type="ECO:0000255" key="1">
    <source>
        <dbReference type="HAMAP-Rule" id="MF_01025"/>
    </source>
</evidence>
<sequence length="515" mass="56141">MNDQVIIFDTTLRDGEQALSASLTVKEKLQIAYALERLGVDVIEAGFPISSPGDFESVQTIAKHIKNSRVCALSRAVAKDIDAAAEALKVADQFRIHTFLATSTIHVQDKLRRSYDDVLEMAVNAVKHARNYTDDVEFSCEDAGRTPIDNLCRMVEAAIDAGASTINIPDTVGYTVPSEFGGIIQTLFNRVPNIDKAIISVHCHDDLGMSVANSIAAVQAGARQIEGTINGIGERAGNCSLEEIAMIIKTRQELLGVSTGIKHEEIHRTSKLVSQLCNMPIQSNKAVVGANAFSHSSGIHQDGMLKNKNTYEIMTPESIGLKNQALNLTSRSGRAAVKSHMDSMGYKEDEYNLDALYADFLKLADRKGQVFDYDLEALMHFSNLREEDDFYKLNYLSVQSGSVMATTSIKMQCGDAEMCEAAVGNGPVDALYQCIYRVTGYEIVLDKFDLTAKGEGEDGLGQADIIANYKGRKYHGTGVSTDIVEASGQALLHVINSIHRADTIAEMKQKKIATV</sequence>
<gene>
    <name evidence="1" type="primary">leuA</name>
    <name type="ordered locus">VP0346</name>
</gene>
<accession>Q87SS7</accession>
<feature type="chain" id="PRO_0000140396" description="2-isopropylmalate synthase">
    <location>
        <begin position="1"/>
        <end position="515"/>
    </location>
</feature>
<feature type="domain" description="Pyruvate carboxyltransferase" evidence="1">
    <location>
        <begin position="5"/>
        <end position="267"/>
    </location>
</feature>
<feature type="region of interest" description="Regulatory domain" evidence="1">
    <location>
        <begin position="392"/>
        <end position="515"/>
    </location>
</feature>
<feature type="binding site" evidence="1">
    <location>
        <position position="14"/>
    </location>
    <ligand>
        <name>Mn(2+)</name>
        <dbReference type="ChEBI" id="CHEBI:29035"/>
    </ligand>
</feature>
<feature type="binding site" evidence="1">
    <location>
        <position position="202"/>
    </location>
    <ligand>
        <name>Mn(2+)</name>
        <dbReference type="ChEBI" id="CHEBI:29035"/>
    </ligand>
</feature>
<feature type="binding site" evidence="1">
    <location>
        <position position="204"/>
    </location>
    <ligand>
        <name>Mn(2+)</name>
        <dbReference type="ChEBI" id="CHEBI:29035"/>
    </ligand>
</feature>
<feature type="binding site" evidence="1">
    <location>
        <position position="238"/>
    </location>
    <ligand>
        <name>Mn(2+)</name>
        <dbReference type="ChEBI" id="CHEBI:29035"/>
    </ligand>
</feature>